<name>RPS6C_ARATH</name>
<organism evidence="10">
    <name type="scientific">Arabidopsis thaliana</name>
    <name type="common">Mouse-ear cress</name>
    <dbReference type="NCBI Taxonomy" id="3702"/>
    <lineage>
        <taxon>Eukaryota</taxon>
        <taxon>Viridiplantae</taxon>
        <taxon>Streptophyta</taxon>
        <taxon>Embryophyta</taxon>
        <taxon>Tracheophyta</taxon>
        <taxon>Spermatophyta</taxon>
        <taxon>Magnoliopsida</taxon>
        <taxon>eudicotyledons</taxon>
        <taxon>Gunneridae</taxon>
        <taxon>Pentapetalae</taxon>
        <taxon>rosids</taxon>
        <taxon>malvids</taxon>
        <taxon>Brassicales</taxon>
        <taxon>Brassicaceae</taxon>
        <taxon>Camelineae</taxon>
        <taxon>Arabidopsis</taxon>
    </lineage>
</organism>
<reference key="1">
    <citation type="journal article" date="2009" name="Plant Physiol.">
        <title>Resistance to the Pseudomonas syringae effector HopA1 is governed by the TIR-NBS-LRR protein RPS6 and is enhanced by mutations in SRFR1.</title>
        <authorList>
            <person name="Kim S.H."/>
            <person name="Kwon S.I."/>
            <person name="Saha D."/>
            <person name="Anyanwu N.C."/>
            <person name="Gassmann W."/>
        </authorList>
    </citation>
    <scope>NUCLEOTIDE SEQUENCE [MRNA]</scope>
    <scope>FUNCTION</scope>
    <scope>ALTERNATIVE SPLICING</scope>
    <source>
        <strain>cv. Columbia</strain>
    </source>
</reference>
<reference key="2">
    <citation type="journal article" date="2000" name="DNA Res.">
        <title>Structural analysis of Arabidopsis thaliana chromosome 5. X. Sequence features of the regions of 3,076,755 bp covered by sixty P1 and TAC clones.</title>
        <authorList>
            <person name="Sato S."/>
            <person name="Nakamura Y."/>
            <person name="Kaneko T."/>
            <person name="Katoh T."/>
            <person name="Asamizu E."/>
            <person name="Kotani H."/>
            <person name="Tabata S."/>
        </authorList>
    </citation>
    <scope>NUCLEOTIDE SEQUENCE [LARGE SCALE GENOMIC DNA]</scope>
    <source>
        <strain>cv. Columbia</strain>
    </source>
</reference>
<reference key="3">
    <citation type="journal article" date="2017" name="Plant J.">
        <title>Araport11: a complete reannotation of the Arabidopsis thaliana reference genome.</title>
        <authorList>
            <person name="Cheng C.Y."/>
            <person name="Krishnakumar V."/>
            <person name="Chan A.P."/>
            <person name="Thibaud-Nissen F."/>
            <person name="Schobel S."/>
            <person name="Town C.D."/>
        </authorList>
    </citation>
    <scope>GENOME REANNOTATION</scope>
    <source>
        <strain>cv. Columbia</strain>
    </source>
</reference>
<reference key="4">
    <citation type="journal article" date="2011" name="Science">
        <title>Pathogen effectors target Arabidopsis EDS1 and alter its interactions with immune regulators.</title>
        <authorList>
            <person name="Bhattacharjee S."/>
            <person name="Halane M.K."/>
            <person name="Kim S.H."/>
            <person name="Gassmann W."/>
        </authorList>
    </citation>
    <scope>INTERACTION WITH EDS1</scope>
</reference>
<evidence type="ECO:0000250" key="1">
    <source>
        <dbReference type="UniProtKB" id="O23530"/>
    </source>
</evidence>
<evidence type="ECO:0000255" key="2"/>
<evidence type="ECO:0000255" key="3">
    <source>
        <dbReference type="PROSITE-ProRule" id="PRU00204"/>
    </source>
</evidence>
<evidence type="ECO:0000269" key="4">
    <source>
    </source>
</evidence>
<evidence type="ECO:0000269" key="5">
    <source>
    </source>
</evidence>
<evidence type="ECO:0000305" key="6"/>
<evidence type="ECO:0000305" key="7">
    <source>
    </source>
</evidence>
<evidence type="ECO:0000312" key="8">
    <source>
        <dbReference type="Araport" id="AT5G46470"/>
    </source>
</evidence>
<evidence type="ECO:0000312" key="9">
    <source>
        <dbReference type="EMBL" id="BAB10815.1"/>
    </source>
</evidence>
<evidence type="ECO:0000312" key="10">
    <source>
        <dbReference type="Proteomes" id="UP000006548"/>
    </source>
</evidence>
<comment type="function">
    <text evidence="4">Disease resistance (R) protein that specifically recognizes the hopA1 type III effector avirulence protein from Pseudomonas syringae. Resistance proteins guard the plant against pathogens that contain an appropriate avirulence protein via an indirect interaction with this avirulence protein. That triggers a defense system including the hypersensitive response, which restricts the pathogen growth.</text>
</comment>
<comment type="catalytic activity">
    <reaction evidence="3">
        <text>NAD(+) + H2O = ADP-D-ribose + nicotinamide + H(+)</text>
        <dbReference type="Rhea" id="RHEA:16301"/>
        <dbReference type="ChEBI" id="CHEBI:15377"/>
        <dbReference type="ChEBI" id="CHEBI:15378"/>
        <dbReference type="ChEBI" id="CHEBI:17154"/>
        <dbReference type="ChEBI" id="CHEBI:57540"/>
        <dbReference type="ChEBI" id="CHEBI:57967"/>
        <dbReference type="EC" id="3.2.2.6"/>
    </reaction>
    <physiologicalReaction direction="left-to-right" evidence="3">
        <dbReference type="Rhea" id="RHEA:16302"/>
    </physiologicalReaction>
</comment>
<comment type="subunit">
    <text evidence="5">Interacts with EDS1.</text>
</comment>
<comment type="alternative products">
    <event type="alternative splicing"/>
    <isoform>
        <id>F4KHH8-1</id>
        <name>1</name>
        <sequence type="displayed"/>
    </isoform>
    <text evidence="4">A number of isoforms are produced.</text>
</comment>
<comment type="tissue specificity">
    <text evidence="7">Ubiquitous.</text>
</comment>
<comment type="domain">
    <text evidence="3">The TIR domain mediates NAD(+) hydrolase (NADase) activity. Self-association of TIR domains is required for NADase activity.</text>
</comment>
<comment type="miscellaneous">
    <text evidence="7">Ecotype cv. Columbia does not respond with a hypersensitive response to hopA1.</text>
</comment>
<comment type="sequence caution" evidence="6">
    <conflict type="erroneous gene model prediction">
        <sequence resource="EMBL-CDS" id="BAB10815"/>
    </conflict>
</comment>
<keyword id="KW-0007">Acetylation</keyword>
<keyword id="KW-0025">Alternative splicing</keyword>
<keyword id="KW-0067">ATP-binding</keyword>
<keyword id="KW-0378">Hydrolase</keyword>
<keyword id="KW-0433">Leucine-rich repeat</keyword>
<keyword id="KW-0520">NAD</keyword>
<keyword id="KW-0547">Nucleotide-binding</keyword>
<keyword id="KW-0611">Plant defense</keyword>
<keyword id="KW-1185">Reference proteome</keyword>
<keyword id="KW-0677">Repeat</keyword>
<proteinExistence type="evidence at protein level"/>
<sequence>MASSSSSSSRNWSYHVFPSFSGEDVRNTFLSHFLKELDRKLIISFKDNEIERSQSLDPELKHGIRNSRIAVVVFSKTYASSSWCLNELLEIVKCKKEFGQLVIPIFYNLDPSHVRKQTGDFGKIFEKTCRNKTVDEKIRWKEALTDVANILGYHIVTWDNEASMIEEIANDILGKMNISPSNDFEDLVGIEDHITKMSSLLHLESEEVRMVGIWGPSGIGKTTIARALFSRLSCQFQSSVFIDKVFISKSMEVYSGANLVDYNMKLHLQRAFLAEIFDKKDIKIHVGAMEKMVKHRKALIVIDDLDDQDVLDALADQTQWFGSGSRIIVVTENKHFLRANRIDHIYKVCLPSNALALEMFCRSAFKKNSPPDDFLELSSEVALRAGNLPLGLNVLGSNLRGINKGYWIDMLPRLQGLDGKIGKTLRVSYDGLNNRKDEAIFRHIACIFNGEKVSDIKLLLANSNLDVNIGLKNLVDRSLICERFNTLEMHSLLQELGKEIVRTQSNQPGEREFLVDLKDICDVLEHNTGTKKVLGITLDIDETDELHIHESSFKGMHNLLFLKIYTKKLDQKKKVRWHLPERFDYLPSRLRLLRFDRYPSKCLPSNFHPENLVKLQMQQSKLEKLWDGVHSLAGLRNMDLRGSRNLKEIPDLSMATNLETLKLSSCSSLVELPSSIQYLNKLNDLDMSYCDHLETIPSGVNLKSLDRLNLSGCSRLKSFLDIPTNISWLDIGQTADIPSNLRLQNLDELILCERVQLRTPLMTMLSPTLTRLTFSNNPSFVEVPSSIQNLYQLEHLEIMNCRNLVTLPTGINLDSLISLDLSHCSQLKTFPDISTNISDLNLSYTAIEEVPLSIEKLSLLCYLDMNGCSNLLCVSPNISKLKHLERADFSDCVELTEASWNGSSSEMVKLLPADNFSTVKLNFINCFKLDLTALIQNQTFFMQLILTGEEVPSYFTHRTSGDSISLPHISVCQSFFSFRGCTVIDVDSFSTISVSFDIEVCCRFIDRFGNHFDSTDFPGYFITTKLGGHLVVFDCYFPFNEEFTTFLDGQFNYDHVDIQFRLTNDNSQLKLKGCGILLSEDVPSLDNRPCSPNILPGVCEDSALERRSFRTKMRMMRMRLLKKLLNR</sequence>
<accession>F4KHH8</accession>
<accession>Q9FHF8</accession>
<feature type="chain" id="PRO_0000431368" description="Disease resistance protein RPS6">
    <location>
        <begin position="1"/>
        <end position="1127"/>
    </location>
</feature>
<feature type="domain" description="TIR" evidence="3">
    <location>
        <begin position="12"/>
        <end position="176"/>
    </location>
</feature>
<feature type="domain" description="NB-ARC" evidence="2">
    <location>
        <begin position="191"/>
        <end position="452"/>
    </location>
</feature>
<feature type="repeat" description="LRR 1" evidence="2">
    <location>
        <begin position="197"/>
        <end position="221"/>
    </location>
</feature>
<feature type="repeat" description="LRR 2" evidence="2">
    <location>
        <begin position="540"/>
        <end position="563"/>
    </location>
</feature>
<feature type="repeat" description="LRR 3" evidence="2">
    <location>
        <begin position="587"/>
        <end position="609"/>
    </location>
</feature>
<feature type="repeat" description="LRR 4" evidence="2">
    <location>
        <begin position="610"/>
        <end position="632"/>
    </location>
</feature>
<feature type="repeat" description="LRR 5" evidence="2">
    <location>
        <begin position="633"/>
        <end position="656"/>
    </location>
</feature>
<feature type="repeat" description="LRR 6" evidence="2">
    <location>
        <begin position="658"/>
        <end position="679"/>
    </location>
</feature>
<feature type="repeat" description="LRR 7" evidence="2">
    <location>
        <begin position="680"/>
        <end position="704"/>
    </location>
</feature>
<feature type="repeat" description="LRR 8" evidence="2">
    <location>
        <begin position="766"/>
        <end position="790"/>
    </location>
</feature>
<feature type="repeat" description="LRR 9" evidence="2">
    <location>
        <begin position="791"/>
        <end position="813"/>
    </location>
</feature>
<feature type="repeat" description="LRR 10" evidence="2">
    <location>
        <begin position="814"/>
        <end position="834"/>
    </location>
</feature>
<feature type="repeat" description="LRR 11" evidence="2">
    <location>
        <begin position="835"/>
        <end position="857"/>
    </location>
</feature>
<feature type="active site" evidence="3">
    <location>
        <position position="87"/>
    </location>
</feature>
<feature type="modified residue" description="N-acetylmethionine" evidence="1">
    <location>
        <position position="1"/>
    </location>
</feature>
<gene>
    <name type="primary">RPS6</name>
    <name evidence="8" type="ordered locus">At5g46470</name>
    <name evidence="9" type="ORF">K11I1.6</name>
</gene>
<protein>
    <recommendedName>
        <fullName>Disease resistance protein RPS6</fullName>
        <ecNumber evidence="3">3.2.2.6</ecNumber>
    </recommendedName>
    <alternativeName>
        <fullName>Resistance to Pseudomonas syringae 6</fullName>
    </alternativeName>
</protein>
<dbReference type="EC" id="3.2.2.6" evidence="3"/>
<dbReference type="EMBL" id="AB019223">
    <property type="protein sequence ID" value="BAB10815.1"/>
    <property type="status" value="ALT_SEQ"/>
    <property type="molecule type" value="Genomic_DNA"/>
</dbReference>
<dbReference type="EMBL" id="CP002688">
    <property type="protein sequence ID" value="AED95389.1"/>
    <property type="molecule type" value="Genomic_DNA"/>
</dbReference>
<dbReference type="RefSeq" id="NP_199459.2">
    <molecule id="F4KHH8-1"/>
    <property type="nucleotide sequence ID" value="NM_124017.3"/>
</dbReference>
<dbReference type="SMR" id="F4KHH8"/>
<dbReference type="FunCoup" id="F4KHH8">
    <property type="interactions" value="16"/>
</dbReference>
<dbReference type="STRING" id="3702.F4KHH8"/>
<dbReference type="iPTMnet" id="F4KHH8"/>
<dbReference type="PaxDb" id="3702-AT5G46470.1"/>
<dbReference type="ProteomicsDB" id="226809">
    <molecule id="F4KHH8-1"/>
</dbReference>
<dbReference type="DNASU" id="834690"/>
<dbReference type="EnsemblPlants" id="AT5G46470.1">
    <molecule id="F4KHH8-1"/>
    <property type="protein sequence ID" value="AT5G46470.1"/>
    <property type="gene ID" value="AT5G46470"/>
</dbReference>
<dbReference type="GeneID" id="834690"/>
<dbReference type="Gramene" id="AT5G46470.1">
    <molecule id="F4KHH8-1"/>
    <property type="protein sequence ID" value="AT5G46470.1"/>
    <property type="gene ID" value="AT5G46470"/>
</dbReference>
<dbReference type="KEGG" id="ath:AT5G46470"/>
<dbReference type="Araport" id="AT5G46470"/>
<dbReference type="TAIR" id="AT5G46470">
    <property type="gene designation" value="RPS6"/>
</dbReference>
<dbReference type="HOGENOM" id="CLU_001561_0_1_1"/>
<dbReference type="InParanoid" id="F4KHH8"/>
<dbReference type="OMA" id="HIHESSF"/>
<dbReference type="PRO" id="PR:F4KHH8"/>
<dbReference type="Proteomes" id="UP000006548">
    <property type="component" value="Chromosome 5"/>
</dbReference>
<dbReference type="ExpressionAtlas" id="F4KHH8">
    <property type="expression patterns" value="baseline and differential"/>
</dbReference>
<dbReference type="GO" id="GO:0043531">
    <property type="term" value="F:ADP binding"/>
    <property type="evidence" value="ECO:0007669"/>
    <property type="project" value="InterPro"/>
</dbReference>
<dbReference type="GO" id="GO:0005524">
    <property type="term" value="F:ATP binding"/>
    <property type="evidence" value="ECO:0007669"/>
    <property type="project" value="UniProtKB-KW"/>
</dbReference>
<dbReference type="GO" id="GO:0016887">
    <property type="term" value="F:ATP hydrolysis activity"/>
    <property type="evidence" value="ECO:0007669"/>
    <property type="project" value="InterPro"/>
</dbReference>
<dbReference type="GO" id="GO:0061809">
    <property type="term" value="F:NAD+ nucleosidase activity, cyclic ADP-ribose generating"/>
    <property type="evidence" value="ECO:0007669"/>
    <property type="project" value="UniProtKB-EC"/>
</dbReference>
<dbReference type="GO" id="GO:0042742">
    <property type="term" value="P:defense response to bacterium"/>
    <property type="evidence" value="ECO:0000315"/>
    <property type="project" value="TAIR"/>
</dbReference>
<dbReference type="GO" id="GO:0007165">
    <property type="term" value="P:signal transduction"/>
    <property type="evidence" value="ECO:0007669"/>
    <property type="project" value="InterPro"/>
</dbReference>
<dbReference type="FunFam" id="1.10.8.430:FF:000002">
    <property type="entry name" value="Disease resistance protein (TIR-NBS-LRR class)"/>
    <property type="match status" value="1"/>
</dbReference>
<dbReference type="FunFam" id="3.40.50.10140:FF:000007">
    <property type="entry name" value="Disease resistance protein (TIR-NBS-LRR class)"/>
    <property type="match status" value="1"/>
</dbReference>
<dbReference type="FunFam" id="3.40.50.300:FF:001002">
    <property type="entry name" value="Disease resistance protein (TIR-NBS-LRR class)"/>
    <property type="match status" value="1"/>
</dbReference>
<dbReference type="FunFam" id="3.80.10.10:FF:000386">
    <property type="entry name" value="Disease resistance protein RPS4"/>
    <property type="match status" value="1"/>
</dbReference>
<dbReference type="Gene3D" id="1.10.8.430">
    <property type="entry name" value="Helical domain of apoptotic protease-activating factors"/>
    <property type="match status" value="1"/>
</dbReference>
<dbReference type="Gene3D" id="3.40.50.300">
    <property type="entry name" value="P-loop containing nucleotide triphosphate hydrolases"/>
    <property type="match status" value="1"/>
</dbReference>
<dbReference type="Gene3D" id="3.80.10.10">
    <property type="entry name" value="Ribonuclease Inhibitor"/>
    <property type="match status" value="2"/>
</dbReference>
<dbReference type="Gene3D" id="3.40.50.10140">
    <property type="entry name" value="Toll/interleukin-1 receptor homology (TIR) domain"/>
    <property type="match status" value="1"/>
</dbReference>
<dbReference type="InterPro" id="IPR003593">
    <property type="entry name" value="AAA+_ATPase"/>
</dbReference>
<dbReference type="InterPro" id="IPR042197">
    <property type="entry name" value="Apaf_helical"/>
</dbReference>
<dbReference type="InterPro" id="IPR044974">
    <property type="entry name" value="Disease_R_plants"/>
</dbReference>
<dbReference type="InterPro" id="IPR011713">
    <property type="entry name" value="Leu-rich_rpt_3"/>
</dbReference>
<dbReference type="InterPro" id="IPR032675">
    <property type="entry name" value="LRR_dom_sf"/>
</dbReference>
<dbReference type="InterPro" id="IPR002182">
    <property type="entry name" value="NB-ARC"/>
</dbReference>
<dbReference type="InterPro" id="IPR027417">
    <property type="entry name" value="P-loop_NTPase"/>
</dbReference>
<dbReference type="InterPro" id="IPR000157">
    <property type="entry name" value="TIR_dom"/>
</dbReference>
<dbReference type="InterPro" id="IPR035897">
    <property type="entry name" value="Toll_tir_struct_dom_sf"/>
</dbReference>
<dbReference type="InterPro" id="IPR036390">
    <property type="entry name" value="WH_DNA-bd_sf"/>
</dbReference>
<dbReference type="PANTHER" id="PTHR11017:SF227">
    <property type="entry name" value="DISEASE RESISTANCE PROTEIN RPS6"/>
    <property type="match status" value="1"/>
</dbReference>
<dbReference type="PANTHER" id="PTHR11017">
    <property type="entry name" value="LEUCINE-RICH REPEAT-CONTAINING PROTEIN"/>
    <property type="match status" value="1"/>
</dbReference>
<dbReference type="Pfam" id="PF07725">
    <property type="entry name" value="LRR_3"/>
    <property type="match status" value="1"/>
</dbReference>
<dbReference type="Pfam" id="PF00931">
    <property type="entry name" value="NB-ARC"/>
    <property type="match status" value="1"/>
</dbReference>
<dbReference type="Pfam" id="PF01582">
    <property type="entry name" value="TIR"/>
    <property type="match status" value="1"/>
</dbReference>
<dbReference type="Pfam" id="PF23282">
    <property type="entry name" value="WHD_ROQ1"/>
    <property type="match status" value="1"/>
</dbReference>
<dbReference type="PRINTS" id="PR00364">
    <property type="entry name" value="DISEASERSIST"/>
</dbReference>
<dbReference type="SMART" id="SM00382">
    <property type="entry name" value="AAA"/>
    <property type="match status" value="1"/>
</dbReference>
<dbReference type="SMART" id="SM00255">
    <property type="entry name" value="TIR"/>
    <property type="match status" value="1"/>
</dbReference>
<dbReference type="SUPFAM" id="SSF52058">
    <property type="entry name" value="L domain-like"/>
    <property type="match status" value="1"/>
</dbReference>
<dbReference type="SUPFAM" id="SSF52540">
    <property type="entry name" value="P-loop containing nucleoside triphosphate hydrolases"/>
    <property type="match status" value="1"/>
</dbReference>
<dbReference type="SUPFAM" id="SSF52200">
    <property type="entry name" value="Toll/Interleukin receptor TIR domain"/>
    <property type="match status" value="1"/>
</dbReference>
<dbReference type="SUPFAM" id="SSF46785">
    <property type="entry name" value="Winged helix' DNA-binding domain"/>
    <property type="match status" value="1"/>
</dbReference>
<dbReference type="PROSITE" id="PS50104">
    <property type="entry name" value="TIR"/>
    <property type="match status" value="1"/>
</dbReference>